<evidence type="ECO:0000255" key="1">
    <source>
        <dbReference type="HAMAP-Rule" id="MF_00608"/>
    </source>
</evidence>
<feature type="chain" id="PRO_1000056694" description="GTP cyclohydrolase III">
    <location>
        <begin position="1"/>
        <end position="255"/>
    </location>
</feature>
<reference key="1">
    <citation type="journal article" date="2006" name="J. Bacteriol.">
        <title>The genome sequence of Methanosphaera stadtmanae reveals why this human intestinal archaeon is restricted to methanol and H2 for methane formation and ATP synthesis.</title>
        <authorList>
            <person name="Fricke W.F."/>
            <person name="Seedorf H."/>
            <person name="Henne A."/>
            <person name="Kruer M."/>
            <person name="Liesegang H."/>
            <person name="Hedderich R."/>
            <person name="Gottschalk G."/>
            <person name="Thauer R.K."/>
        </authorList>
    </citation>
    <scope>NUCLEOTIDE SEQUENCE [LARGE SCALE GENOMIC DNA]</scope>
    <source>
        <strain>ATCC 43021 / DSM 3091 / JCM 11832 / MCB-3</strain>
    </source>
</reference>
<organism>
    <name type="scientific">Methanosphaera stadtmanae (strain ATCC 43021 / DSM 3091 / JCM 11832 / MCB-3)</name>
    <dbReference type="NCBI Taxonomy" id="339860"/>
    <lineage>
        <taxon>Archaea</taxon>
        <taxon>Methanobacteriati</taxon>
        <taxon>Methanobacteriota</taxon>
        <taxon>Methanomada group</taxon>
        <taxon>Methanobacteria</taxon>
        <taxon>Methanobacteriales</taxon>
        <taxon>Methanobacteriaceae</taxon>
        <taxon>Methanosphaera</taxon>
    </lineage>
</organism>
<protein>
    <recommendedName>
        <fullName evidence="1">GTP cyclohydrolase III</fullName>
        <ecNumber evidence="1">3.5.4.29</ecNumber>
    </recommendedName>
</protein>
<dbReference type="EC" id="3.5.4.29" evidence="1"/>
<dbReference type="EMBL" id="CP000102">
    <property type="protein sequence ID" value="ABC57775.1"/>
    <property type="molecule type" value="Genomic_DNA"/>
</dbReference>
<dbReference type="RefSeq" id="WP_011406974.1">
    <property type="nucleotide sequence ID" value="NC_007681.1"/>
</dbReference>
<dbReference type="SMR" id="Q2NEH8"/>
<dbReference type="STRING" id="339860.Msp_1404"/>
<dbReference type="KEGG" id="mst:Msp_1404"/>
<dbReference type="eggNOG" id="arCOG04202">
    <property type="taxonomic scope" value="Archaea"/>
</dbReference>
<dbReference type="HOGENOM" id="CLU_080076_0_0_2"/>
<dbReference type="OrthoDB" id="25211at2157"/>
<dbReference type="Proteomes" id="UP000001931">
    <property type="component" value="Chromosome"/>
</dbReference>
<dbReference type="GO" id="GO:0005525">
    <property type="term" value="F:GTP binding"/>
    <property type="evidence" value="ECO:0007669"/>
    <property type="project" value="UniProtKB-KW"/>
</dbReference>
<dbReference type="GO" id="GO:0043740">
    <property type="term" value="F:GTP cyclohydrolase IIa activity"/>
    <property type="evidence" value="ECO:0007669"/>
    <property type="project" value="UniProtKB-EC"/>
</dbReference>
<dbReference type="GO" id="GO:0009058">
    <property type="term" value="P:biosynthetic process"/>
    <property type="evidence" value="ECO:0007669"/>
    <property type="project" value="InterPro"/>
</dbReference>
<dbReference type="Gene3D" id="3.30.70.270">
    <property type="match status" value="1"/>
</dbReference>
<dbReference type="Gene3D" id="3.30.70.1230">
    <property type="entry name" value="Nucleotide cyclase"/>
    <property type="match status" value="1"/>
</dbReference>
<dbReference type="HAMAP" id="MF_00608">
    <property type="entry name" value="GTP_cyclohydro_3"/>
    <property type="match status" value="1"/>
</dbReference>
<dbReference type="InterPro" id="IPR007839">
    <property type="entry name" value="GTP_CycHdrlase_3"/>
</dbReference>
<dbReference type="InterPro" id="IPR029787">
    <property type="entry name" value="Nucleotide_cyclase"/>
</dbReference>
<dbReference type="InterPro" id="IPR043128">
    <property type="entry name" value="Rev_trsase/Diguanyl_cyclase"/>
</dbReference>
<dbReference type="NCBIfam" id="NF002587">
    <property type="entry name" value="PRK02240.1"/>
    <property type="match status" value="1"/>
</dbReference>
<dbReference type="PANTHER" id="PTHR42202">
    <property type="entry name" value="GTP CYCLOHYDROLASE III"/>
    <property type="match status" value="1"/>
</dbReference>
<dbReference type="PANTHER" id="PTHR42202:SF1">
    <property type="entry name" value="GTP CYCLOHYDROLASE III"/>
    <property type="match status" value="1"/>
</dbReference>
<dbReference type="Pfam" id="PF05165">
    <property type="entry name" value="GCH_III"/>
    <property type="match status" value="1"/>
</dbReference>
<dbReference type="PIRSF" id="PIRSF009265">
    <property type="entry name" value="GTP_cyclohydro_3"/>
    <property type="match status" value="1"/>
</dbReference>
<sequence>MIQVTLIQIDNYGPWTVTPGPRAEPDLQTLQSRLYGDLEREFGAHGAIVFFNRFDNLIAISNGMDYDDHLLIQQSIRNRYPITISMGVGTADTAYEAQKIATKMIQNGGGAQSANRCEVLNIDSLADDDNSLVQIAHIDINDITNTLTDIETAFDTSIKVYEVLLALMDELAKIGGMCFFIGGDNYMAPTNGISKDQLREALKVVDKKTGVTLKAGIGVAKQAGRAADLADIGLEDIRAELVDDSVLLFNDLDEY</sequence>
<accession>Q2NEH8</accession>
<comment type="function">
    <text evidence="1">Catalyzes the formation of 2-amino-5-formylamino-6-ribofuranosylamino-4(3H)-pyrimidinone ribonucleotide monophosphate and inorganic phosphate from GTP. Also has an independent pyrophosphate phosphohydrolase activity.</text>
</comment>
<comment type="catalytic activity">
    <reaction evidence="1">
        <text>GTP + 3 H2O = 2-amino-5-formylamino-6-(5-phospho-D-ribosylamino)pyrimidin-4(3H)-one + 2 phosphate + 2 H(+)</text>
        <dbReference type="Rhea" id="RHEA:22468"/>
        <dbReference type="ChEBI" id="CHEBI:15377"/>
        <dbReference type="ChEBI" id="CHEBI:15378"/>
        <dbReference type="ChEBI" id="CHEBI:37565"/>
        <dbReference type="ChEBI" id="CHEBI:43474"/>
        <dbReference type="ChEBI" id="CHEBI:57258"/>
        <dbReference type="EC" id="3.5.4.29"/>
    </reaction>
</comment>
<comment type="similarity">
    <text evidence="1">Belongs to the archaeal-type GTP cyclohydrolase family.</text>
</comment>
<gene>
    <name evidence="1" type="primary">gch3</name>
    <name type="ordered locus">Msp_1404</name>
</gene>
<name>GCH3_METST</name>
<keyword id="KW-0342">GTP-binding</keyword>
<keyword id="KW-0378">Hydrolase</keyword>
<keyword id="KW-0547">Nucleotide-binding</keyword>
<keyword id="KW-1185">Reference proteome</keyword>
<proteinExistence type="inferred from homology"/>